<feature type="chain" id="PRO_0000360392" description="Putative uncharacterized protein ycf15">
    <location>
        <begin position="1"/>
        <end position="100"/>
    </location>
</feature>
<gene>
    <name type="primary">ycf15-A</name>
    <name type="ORF">PSC0947</name>
</gene>
<gene>
    <name type="primary">ycf15-B</name>
    <name type="ORF">PSC1474</name>
</gene>
<accession>Q68RU5</accession>
<evidence type="ECO:0000305" key="1"/>
<reference key="1">
    <citation type="journal article" date="2004" name="DNA Res.">
        <title>Complete chloroplast genome sequence from Korea ginseng (Panax schinseng Nees) and comparative analysis of sequence evolution among 17 vascular plants.</title>
        <authorList>
            <person name="Kim K.-J."/>
            <person name="Lee H.-L."/>
        </authorList>
    </citation>
    <scope>NUCLEOTIDE SEQUENCE [LARGE SCALE GENOMIC DNA]</scope>
</reference>
<proteinExistence type="uncertain"/>
<sequence>METLVSSIFWTLAPWNNMLLLKHGRIEILEQNTMYGWYELPKQEFLNSEQPVHIFTTKKRSTGFRIGPESEGRLECQQASIIEFTRPDSTHFGNVQCQSH</sequence>
<comment type="subcellular location">
    <subcellularLocation>
        <location>Plastid</location>
        <location>Chloroplast</location>
    </subcellularLocation>
</comment>
<comment type="similarity">
    <text evidence="1">Belongs to the ycf15 family.</text>
</comment>
<comment type="caution">
    <text evidence="1">Could be the product of a pseudogene.</text>
</comment>
<dbReference type="EMBL" id="AY582139">
    <property type="protein sequence ID" value="AAT98553.1"/>
    <property type="molecule type" value="Genomic_DNA"/>
</dbReference>
<dbReference type="EMBL" id="AY582139">
    <property type="protein sequence ID" value="AAT98572.1"/>
    <property type="molecule type" value="Genomic_DNA"/>
</dbReference>
<dbReference type="GO" id="GO:0009507">
    <property type="term" value="C:chloroplast"/>
    <property type="evidence" value="ECO:0007669"/>
    <property type="project" value="UniProtKB-SubCell"/>
</dbReference>
<dbReference type="InterPro" id="IPR019645">
    <property type="entry name" value="Uncharacterised_Ycf15"/>
</dbReference>
<dbReference type="Pfam" id="PF10705">
    <property type="entry name" value="Ycf15"/>
    <property type="match status" value="1"/>
</dbReference>
<geneLocation type="chloroplast"/>
<protein>
    <recommendedName>
        <fullName>Putative uncharacterized protein ycf15</fullName>
    </recommendedName>
</protein>
<organism>
    <name type="scientific">Panax ginseng</name>
    <name type="common">Korean ginseng</name>
    <dbReference type="NCBI Taxonomy" id="4054"/>
    <lineage>
        <taxon>Eukaryota</taxon>
        <taxon>Viridiplantae</taxon>
        <taxon>Streptophyta</taxon>
        <taxon>Embryophyta</taxon>
        <taxon>Tracheophyta</taxon>
        <taxon>Spermatophyta</taxon>
        <taxon>Magnoliopsida</taxon>
        <taxon>eudicotyledons</taxon>
        <taxon>Gunneridae</taxon>
        <taxon>Pentapetalae</taxon>
        <taxon>asterids</taxon>
        <taxon>campanulids</taxon>
        <taxon>Apiales</taxon>
        <taxon>Araliaceae</taxon>
        <taxon>Panax</taxon>
    </lineage>
</organism>
<keyword id="KW-0150">Chloroplast</keyword>
<keyword id="KW-0934">Plastid</keyword>
<name>YCF15_PANGI</name>